<feature type="chain" id="PRO_0000343224" description="Homeobox protein notochord">
    <location>
        <begin position="1"/>
        <end position="240"/>
    </location>
</feature>
<feature type="DNA-binding region" description="Homeobox" evidence="1">
    <location>
        <begin position="149"/>
        <end position="208"/>
    </location>
</feature>
<feature type="region of interest" description="Disordered" evidence="2">
    <location>
        <begin position="1"/>
        <end position="21"/>
    </location>
</feature>
<feature type="region of interest" description="Disordered" evidence="2">
    <location>
        <begin position="208"/>
        <end position="240"/>
    </location>
</feature>
<feature type="compositionally biased region" description="Polar residues" evidence="2">
    <location>
        <begin position="1"/>
        <end position="13"/>
    </location>
</feature>
<feature type="compositionally biased region" description="Low complexity" evidence="2">
    <location>
        <begin position="213"/>
        <end position="225"/>
    </location>
</feature>
<feature type="sequence variant" description="In truncate (tc); affects homeodomain stability." evidence="3">
    <original>F</original>
    <variation>C</variation>
    <location>
        <position position="168"/>
    </location>
</feature>
<reference key="1">
    <citation type="journal article" date="2004" name="Genes Dev.">
        <title>The mouse homeobox gene Not is required for caudal notochord development and affected by the truncate mutation.</title>
        <authorList>
            <person name="Ben Abdelkhalek H."/>
            <person name="Beckers A."/>
            <person name="Schuster-Gossler K."/>
            <person name="Pavlova M.N."/>
            <person name="Burkhardt H."/>
            <person name="Lickert H."/>
            <person name="Rossant J."/>
            <person name="Reinhardt R."/>
            <person name="Schalkwyk L.C."/>
            <person name="Mueller I."/>
            <person name="Herrmann B.G."/>
            <person name="Ceolin M."/>
            <person name="Rivera-Pomar R."/>
            <person name="Gossler A."/>
        </authorList>
    </citation>
    <scope>NUCLEOTIDE SEQUENCE [MRNA]</scope>
    <scope>FUNCTION</scope>
    <scope>DEVELOPMENTAL STAGE</scope>
    <scope>VARIANT TRUNCATE CYS-168</scope>
    <source>
        <strain>129/SvImJ</strain>
        <strain>C57BL/6J</strain>
        <strain>CD-1</strain>
        <tissue>Embryo</tissue>
    </source>
</reference>
<reference key="2">
    <citation type="journal article" date="2005" name="Science">
        <title>The transcriptional landscape of the mammalian genome.</title>
        <authorList>
            <person name="Carninci P."/>
            <person name="Kasukawa T."/>
            <person name="Katayama S."/>
            <person name="Gough J."/>
            <person name="Frith M.C."/>
            <person name="Maeda N."/>
            <person name="Oyama R."/>
            <person name="Ravasi T."/>
            <person name="Lenhard B."/>
            <person name="Wells C."/>
            <person name="Kodzius R."/>
            <person name="Shimokawa K."/>
            <person name="Bajic V.B."/>
            <person name="Brenner S.E."/>
            <person name="Batalov S."/>
            <person name="Forrest A.R."/>
            <person name="Zavolan M."/>
            <person name="Davis M.J."/>
            <person name="Wilming L.G."/>
            <person name="Aidinis V."/>
            <person name="Allen J.E."/>
            <person name="Ambesi-Impiombato A."/>
            <person name="Apweiler R."/>
            <person name="Aturaliya R.N."/>
            <person name="Bailey T.L."/>
            <person name="Bansal M."/>
            <person name="Baxter L."/>
            <person name="Beisel K.W."/>
            <person name="Bersano T."/>
            <person name="Bono H."/>
            <person name="Chalk A.M."/>
            <person name="Chiu K.P."/>
            <person name="Choudhary V."/>
            <person name="Christoffels A."/>
            <person name="Clutterbuck D.R."/>
            <person name="Crowe M.L."/>
            <person name="Dalla E."/>
            <person name="Dalrymple B.P."/>
            <person name="de Bono B."/>
            <person name="Della Gatta G."/>
            <person name="di Bernardo D."/>
            <person name="Down T."/>
            <person name="Engstrom P."/>
            <person name="Fagiolini M."/>
            <person name="Faulkner G."/>
            <person name="Fletcher C.F."/>
            <person name="Fukushima T."/>
            <person name="Furuno M."/>
            <person name="Futaki S."/>
            <person name="Gariboldi M."/>
            <person name="Georgii-Hemming P."/>
            <person name="Gingeras T.R."/>
            <person name="Gojobori T."/>
            <person name="Green R.E."/>
            <person name="Gustincich S."/>
            <person name="Harbers M."/>
            <person name="Hayashi Y."/>
            <person name="Hensch T.K."/>
            <person name="Hirokawa N."/>
            <person name="Hill D."/>
            <person name="Huminiecki L."/>
            <person name="Iacono M."/>
            <person name="Ikeo K."/>
            <person name="Iwama A."/>
            <person name="Ishikawa T."/>
            <person name="Jakt M."/>
            <person name="Kanapin A."/>
            <person name="Katoh M."/>
            <person name="Kawasawa Y."/>
            <person name="Kelso J."/>
            <person name="Kitamura H."/>
            <person name="Kitano H."/>
            <person name="Kollias G."/>
            <person name="Krishnan S.P."/>
            <person name="Kruger A."/>
            <person name="Kummerfeld S.K."/>
            <person name="Kurochkin I.V."/>
            <person name="Lareau L.F."/>
            <person name="Lazarevic D."/>
            <person name="Lipovich L."/>
            <person name="Liu J."/>
            <person name="Liuni S."/>
            <person name="McWilliam S."/>
            <person name="Madan Babu M."/>
            <person name="Madera M."/>
            <person name="Marchionni L."/>
            <person name="Matsuda H."/>
            <person name="Matsuzawa S."/>
            <person name="Miki H."/>
            <person name="Mignone F."/>
            <person name="Miyake S."/>
            <person name="Morris K."/>
            <person name="Mottagui-Tabar S."/>
            <person name="Mulder N."/>
            <person name="Nakano N."/>
            <person name="Nakauchi H."/>
            <person name="Ng P."/>
            <person name="Nilsson R."/>
            <person name="Nishiguchi S."/>
            <person name="Nishikawa S."/>
            <person name="Nori F."/>
            <person name="Ohara O."/>
            <person name="Okazaki Y."/>
            <person name="Orlando V."/>
            <person name="Pang K.C."/>
            <person name="Pavan W.J."/>
            <person name="Pavesi G."/>
            <person name="Pesole G."/>
            <person name="Petrovsky N."/>
            <person name="Piazza S."/>
            <person name="Reed J."/>
            <person name="Reid J.F."/>
            <person name="Ring B.Z."/>
            <person name="Ringwald M."/>
            <person name="Rost B."/>
            <person name="Ruan Y."/>
            <person name="Salzberg S.L."/>
            <person name="Sandelin A."/>
            <person name="Schneider C."/>
            <person name="Schoenbach C."/>
            <person name="Sekiguchi K."/>
            <person name="Semple C.A."/>
            <person name="Seno S."/>
            <person name="Sessa L."/>
            <person name="Sheng Y."/>
            <person name="Shibata Y."/>
            <person name="Shimada H."/>
            <person name="Shimada K."/>
            <person name="Silva D."/>
            <person name="Sinclair B."/>
            <person name="Sperling S."/>
            <person name="Stupka E."/>
            <person name="Sugiura K."/>
            <person name="Sultana R."/>
            <person name="Takenaka Y."/>
            <person name="Taki K."/>
            <person name="Tammoja K."/>
            <person name="Tan S.L."/>
            <person name="Tang S."/>
            <person name="Taylor M.S."/>
            <person name="Tegner J."/>
            <person name="Teichmann S.A."/>
            <person name="Ueda H.R."/>
            <person name="van Nimwegen E."/>
            <person name="Verardo R."/>
            <person name="Wei C.L."/>
            <person name="Yagi K."/>
            <person name="Yamanishi H."/>
            <person name="Zabarovsky E."/>
            <person name="Zhu S."/>
            <person name="Zimmer A."/>
            <person name="Hide W."/>
            <person name="Bult C."/>
            <person name="Grimmond S.M."/>
            <person name="Teasdale R.D."/>
            <person name="Liu E.T."/>
            <person name="Brusic V."/>
            <person name="Quackenbush J."/>
            <person name="Wahlestedt C."/>
            <person name="Mattick J.S."/>
            <person name="Hume D.A."/>
            <person name="Kai C."/>
            <person name="Sasaki D."/>
            <person name="Tomaru Y."/>
            <person name="Fukuda S."/>
            <person name="Kanamori-Katayama M."/>
            <person name="Suzuki M."/>
            <person name="Aoki J."/>
            <person name="Arakawa T."/>
            <person name="Iida J."/>
            <person name="Imamura K."/>
            <person name="Itoh M."/>
            <person name="Kato T."/>
            <person name="Kawaji H."/>
            <person name="Kawagashira N."/>
            <person name="Kawashima T."/>
            <person name="Kojima M."/>
            <person name="Kondo S."/>
            <person name="Konno H."/>
            <person name="Nakano K."/>
            <person name="Ninomiya N."/>
            <person name="Nishio T."/>
            <person name="Okada M."/>
            <person name="Plessy C."/>
            <person name="Shibata K."/>
            <person name="Shiraki T."/>
            <person name="Suzuki S."/>
            <person name="Tagami M."/>
            <person name="Waki K."/>
            <person name="Watahiki A."/>
            <person name="Okamura-Oho Y."/>
            <person name="Suzuki H."/>
            <person name="Kawai J."/>
            <person name="Hayashizaki Y."/>
        </authorList>
    </citation>
    <scope>NUCLEOTIDE SEQUENCE [LARGE SCALE MRNA]</scope>
    <source>
        <strain>C57BL/6J</strain>
        <tissue>Egg</tissue>
    </source>
</reference>
<reference key="3">
    <citation type="journal article" date="2004" name="Genome Res.">
        <title>The status, quality, and expansion of the NIH full-length cDNA project: the Mammalian Gene Collection (MGC).</title>
        <authorList>
            <consortium name="The MGC Project Team"/>
        </authorList>
    </citation>
    <scope>NUCLEOTIDE SEQUENCE [LARGE SCALE MRNA]</scope>
</reference>
<reference key="4">
    <citation type="journal article" date="2007" name="Dev. Cell">
        <title>Live imaging and genetic analysis of mouse notochord formation reveals regional morphogenetic mechanisms.</title>
        <authorList>
            <person name="Yamanaka Y."/>
            <person name="Tamplin O.J."/>
            <person name="Beckers A."/>
            <person name="Gossler A."/>
            <person name="Rossant J."/>
        </authorList>
    </citation>
    <scope>FUNCTION</scope>
</reference>
<reference key="5">
    <citation type="journal article" date="2007" name="Proc. Natl. Acad. Sci. U.S.A.">
        <title>The mouse homeobox gene Noto regulates node morphogenesis, notochordal ciliogenesis, and left right patterning.</title>
        <authorList>
            <person name="Beckers A."/>
            <person name="Alten L."/>
            <person name="Viebahn C."/>
            <person name="Andre P."/>
            <person name="Gossler A."/>
        </authorList>
    </citation>
    <scope>FUNCTION</scope>
</reference>
<reference key="6">
    <citation type="journal article" date="2012" name="Development">
        <title>Differential regulation of node formation, nodal ciliogenesis and cilia positioning by Noto and Foxj1.</title>
        <authorList>
            <person name="Alten L."/>
            <person name="Schuster-Gossler K."/>
            <person name="Beckers A."/>
            <person name="Groos S."/>
            <person name="Ulmer B."/>
            <person name="Hegermann J."/>
            <person name="Ochs M."/>
            <person name="Gossler A."/>
        </authorList>
    </citation>
    <scope>FUNCTION</scope>
</reference>
<reference key="7">
    <citation type="journal article" date="2017" name="Dev. Biol.">
        <title>Identification of FOXJ1 effectors during ciliogenesis in the foetal respiratory epithelium and embryonic left-right organiser of the mouse.</title>
        <authorList>
            <person name="Stauber M."/>
            <person name="Weidemann M."/>
            <person name="Dittrich-Breiholz O."/>
            <person name="Lobschat K."/>
            <person name="Alten L."/>
            <person name="Mai M."/>
            <person name="Beckers A."/>
            <person name="Kracht M."/>
            <person name="Gossler A."/>
        </authorList>
    </citation>
    <scope>FUNCTION</scope>
</reference>
<keyword id="KW-0217">Developmental protein</keyword>
<keyword id="KW-0225">Disease variant</keyword>
<keyword id="KW-0238">DNA-binding</keyword>
<keyword id="KW-0371">Homeobox</keyword>
<keyword id="KW-0539">Nucleus</keyword>
<keyword id="KW-1185">Reference proteome</keyword>
<keyword id="KW-0804">Transcription</keyword>
<keyword id="KW-0805">Transcription regulation</keyword>
<comment type="function">
    <text evidence="3 4 5 6 7">Transcription factor that controls node morphogenesis (PubMed:15231714, PubMed:17884984, PubMed:18061569, PubMed:22357932). Acts downstream of both FOXA2 and Brachyury (T) during notochord development (PubMed:15231714). Is essential for cilia formation in the posterior notochord (PNC) and for left-right patterning; acts upstream of FOXJ1 and RFX3 in this process and is required for the expression of various components important for axonemal assembly and function (PubMed:17884984). Plays a role in regulating axial versus paraxial cell fate (PubMed:18061569). Activates the transcription of ciliary proteins C11orf97 homolog, FAM183B and SPACA9 in the embryonic ventral node (PubMed:27914912).</text>
</comment>
<comment type="subcellular location">
    <subcellularLocation>
        <location evidence="1">Nucleus</location>
    </subcellularLocation>
</comment>
<comment type="developmental stage">
    <text evidence="3">First detected at 7.5 dpc in the node at the distal tip of the egg cylinder and is largely confined to the ventral node. Between 8 dpc and 9 dpc, highly expressed in the node and newly formed notochord. At 12.5 dpc, expression is confined to the notochordal plate and caudal portion of the notochord.</text>
</comment>
<comment type="disease">
    <text evidence="3">Defects in Noto are the cause of the truncate (tc) phenotype. Truncate (tc) is a recessive mutation that affects the development of the caudal notochord. Mice homozygous for tc are viable but viability is reduced, which is attributed at least in part to spinal injury in the sacral and lower lumbar region.</text>
</comment>
<proteinExistence type="evidence at protein level"/>
<sequence>MSSPAPSGTQVQPGSLRPCPGAVSPVVPRRLARGRLESSFSVEAILARPKTRELAATSLPLSTCTSLNLLGAVSQYGVLPWVCSTGSWLPAYLSVGVYPLCSMSCVPGLNVTHHQQGLRLTGSELPYCLGPLKWAPTVDLRDHGTERHTKRVRTTFNLQQLQELEKVFAKQHNLVGKERAQLAARLHLTENQVRIWFQNRRVKYQKQQKLKLPSSSVMEEPSSSSDGNIQSEDAELGIGS</sequence>
<organism>
    <name type="scientific">Mus musculus</name>
    <name type="common">Mouse</name>
    <dbReference type="NCBI Taxonomy" id="10090"/>
    <lineage>
        <taxon>Eukaryota</taxon>
        <taxon>Metazoa</taxon>
        <taxon>Chordata</taxon>
        <taxon>Craniata</taxon>
        <taxon>Vertebrata</taxon>
        <taxon>Euteleostomi</taxon>
        <taxon>Mammalia</taxon>
        <taxon>Eutheria</taxon>
        <taxon>Euarchontoglires</taxon>
        <taxon>Glires</taxon>
        <taxon>Rodentia</taxon>
        <taxon>Myomorpha</taxon>
        <taxon>Muroidea</taxon>
        <taxon>Muridae</taxon>
        <taxon>Murinae</taxon>
        <taxon>Mus</taxon>
        <taxon>Mus</taxon>
    </lineage>
</organism>
<accession>Q5TIS6</accession>
<evidence type="ECO:0000255" key="1">
    <source>
        <dbReference type="PROSITE-ProRule" id="PRU00108"/>
    </source>
</evidence>
<evidence type="ECO:0000256" key="2">
    <source>
        <dbReference type="SAM" id="MobiDB-lite"/>
    </source>
</evidence>
<evidence type="ECO:0000269" key="3">
    <source>
    </source>
</evidence>
<evidence type="ECO:0000269" key="4">
    <source>
    </source>
</evidence>
<evidence type="ECO:0000269" key="5">
    <source>
    </source>
</evidence>
<evidence type="ECO:0000269" key="6">
    <source>
    </source>
</evidence>
<evidence type="ECO:0000269" key="7">
    <source>
    </source>
</evidence>
<name>NOTO_MOUSE</name>
<gene>
    <name type="primary">Noto</name>
    <name type="synonym">Not</name>
</gene>
<protein>
    <recommendedName>
        <fullName>Homeobox protein notochord</fullName>
    </recommendedName>
</protein>
<dbReference type="EMBL" id="AJ862873">
    <property type="protein sequence ID" value="CAI05851.1"/>
    <property type="molecule type" value="mRNA"/>
</dbReference>
<dbReference type="EMBL" id="AJ862874">
    <property type="protein sequence ID" value="CAI05852.1"/>
    <property type="molecule type" value="mRNA"/>
</dbReference>
<dbReference type="EMBL" id="AJ862875">
    <property type="protein sequence ID" value="CAI05853.1"/>
    <property type="molecule type" value="mRNA"/>
</dbReference>
<dbReference type="EMBL" id="AK135886">
    <property type="protein sequence ID" value="BAE22716.1"/>
    <property type="molecule type" value="mRNA"/>
</dbReference>
<dbReference type="EMBL" id="BC139154">
    <property type="protein sequence ID" value="AAI39155.1"/>
    <property type="molecule type" value="mRNA"/>
</dbReference>
<dbReference type="EMBL" id="BC139155">
    <property type="protein sequence ID" value="AAI39156.1"/>
    <property type="molecule type" value="mRNA"/>
</dbReference>
<dbReference type="CCDS" id="CCDS20293.1"/>
<dbReference type="RefSeq" id="NP_001007473.1">
    <property type="nucleotide sequence ID" value="NM_001007472.2"/>
</dbReference>
<dbReference type="SMR" id="Q5TIS6"/>
<dbReference type="FunCoup" id="Q5TIS6">
    <property type="interactions" value="459"/>
</dbReference>
<dbReference type="STRING" id="10090.ENSMUSP00000087006"/>
<dbReference type="GlyGen" id="Q5TIS6">
    <property type="glycosylation" value="1 site"/>
</dbReference>
<dbReference type="PhosphoSitePlus" id="Q5TIS6"/>
<dbReference type="PaxDb" id="10090-ENSMUSP00000087006"/>
<dbReference type="Antibodypedia" id="31317">
    <property type="antibodies" value="29 antibodies from 12 providers"/>
</dbReference>
<dbReference type="DNASU" id="384452"/>
<dbReference type="Ensembl" id="ENSMUST00000089578.9">
    <property type="protein sequence ID" value="ENSMUSP00000087006.7"/>
    <property type="gene ID" value="ENSMUSG00000068302.9"/>
</dbReference>
<dbReference type="GeneID" id="384452"/>
<dbReference type="KEGG" id="mmu:384452"/>
<dbReference type="UCSC" id="uc009cpp.2">
    <property type="organism name" value="mouse"/>
</dbReference>
<dbReference type="AGR" id="MGI:3053002"/>
<dbReference type="CTD" id="344022"/>
<dbReference type="MGI" id="MGI:3053002">
    <property type="gene designation" value="Noto"/>
</dbReference>
<dbReference type="VEuPathDB" id="HostDB:ENSMUSG00000068302"/>
<dbReference type="eggNOG" id="KOG0843">
    <property type="taxonomic scope" value="Eukaryota"/>
</dbReference>
<dbReference type="GeneTree" id="ENSGT00940000154361"/>
<dbReference type="HOGENOM" id="CLU_1106811_0_0_1"/>
<dbReference type="InParanoid" id="Q5TIS6"/>
<dbReference type="OMA" id="CPATWLP"/>
<dbReference type="OrthoDB" id="6159439at2759"/>
<dbReference type="PhylomeDB" id="Q5TIS6"/>
<dbReference type="TreeFam" id="TF326858"/>
<dbReference type="BioGRID-ORCS" id="384452">
    <property type="hits" value="2 hits in 76 CRISPR screens"/>
</dbReference>
<dbReference type="PRO" id="PR:Q5TIS6"/>
<dbReference type="Proteomes" id="UP000000589">
    <property type="component" value="Chromosome 6"/>
</dbReference>
<dbReference type="RNAct" id="Q5TIS6">
    <property type="molecule type" value="protein"/>
</dbReference>
<dbReference type="Bgee" id="ENSMUSG00000068302">
    <property type="expression patterns" value="Expressed in primary oocyte and 13 other cell types or tissues"/>
</dbReference>
<dbReference type="ExpressionAtlas" id="Q5TIS6">
    <property type="expression patterns" value="baseline and differential"/>
</dbReference>
<dbReference type="GO" id="GO:0005654">
    <property type="term" value="C:nucleoplasm"/>
    <property type="evidence" value="ECO:0000304"/>
    <property type="project" value="Reactome"/>
</dbReference>
<dbReference type="GO" id="GO:1990837">
    <property type="term" value="F:sequence-specific double-stranded DNA binding"/>
    <property type="evidence" value="ECO:0007669"/>
    <property type="project" value="Ensembl"/>
</dbReference>
<dbReference type="GO" id="GO:0007368">
    <property type="term" value="P:determination of left/right symmetry"/>
    <property type="evidence" value="ECO:0000315"/>
    <property type="project" value="MGI"/>
</dbReference>
<dbReference type="GO" id="GO:0009953">
    <property type="term" value="P:dorsal/ventral pattern formation"/>
    <property type="evidence" value="ECO:0000315"/>
    <property type="project" value="MGI"/>
</dbReference>
<dbReference type="GO" id="GO:0009880">
    <property type="term" value="P:embryonic pattern specification"/>
    <property type="evidence" value="ECO:0000315"/>
    <property type="project" value="MGI"/>
</dbReference>
<dbReference type="GO" id="GO:0001947">
    <property type="term" value="P:heart looping"/>
    <property type="evidence" value="ECO:0000315"/>
    <property type="project" value="MGI"/>
</dbReference>
<dbReference type="GO" id="GO:0044458">
    <property type="term" value="P:motile cilium assembly"/>
    <property type="evidence" value="ECO:0000316"/>
    <property type="project" value="MGI"/>
</dbReference>
<dbReference type="GO" id="GO:0030903">
    <property type="term" value="P:notochord development"/>
    <property type="evidence" value="ECO:0000315"/>
    <property type="project" value="MGI"/>
</dbReference>
<dbReference type="GO" id="GO:1902017">
    <property type="term" value="P:regulation of cilium assembly"/>
    <property type="evidence" value="ECO:0000315"/>
    <property type="project" value="MGI"/>
</dbReference>
<dbReference type="CDD" id="cd00086">
    <property type="entry name" value="homeodomain"/>
    <property type="match status" value="1"/>
</dbReference>
<dbReference type="Gene3D" id="1.10.10.60">
    <property type="entry name" value="Homeodomain-like"/>
    <property type="match status" value="1"/>
</dbReference>
<dbReference type="InterPro" id="IPR050877">
    <property type="entry name" value="EMX-VAX-Noto_Homeobox_TFs"/>
</dbReference>
<dbReference type="InterPro" id="IPR001356">
    <property type="entry name" value="HD"/>
</dbReference>
<dbReference type="InterPro" id="IPR009057">
    <property type="entry name" value="Homeodomain-like_sf"/>
</dbReference>
<dbReference type="PANTHER" id="PTHR24339">
    <property type="entry name" value="HOMEOBOX PROTEIN EMX-RELATED"/>
    <property type="match status" value="1"/>
</dbReference>
<dbReference type="PANTHER" id="PTHR24339:SF68">
    <property type="entry name" value="HOMEOBOX PROTEIN NOTOCHORD"/>
    <property type="match status" value="1"/>
</dbReference>
<dbReference type="Pfam" id="PF00046">
    <property type="entry name" value="Homeodomain"/>
    <property type="match status" value="1"/>
</dbReference>
<dbReference type="SMART" id="SM00389">
    <property type="entry name" value="HOX"/>
    <property type="match status" value="1"/>
</dbReference>
<dbReference type="SUPFAM" id="SSF46689">
    <property type="entry name" value="Homeodomain-like"/>
    <property type="match status" value="1"/>
</dbReference>
<dbReference type="PROSITE" id="PS50071">
    <property type="entry name" value="HOMEOBOX_2"/>
    <property type="match status" value="1"/>
</dbReference>